<organism>
    <name type="scientific">Rhodopseudomonas palustris (strain TIE-1)</name>
    <dbReference type="NCBI Taxonomy" id="395960"/>
    <lineage>
        <taxon>Bacteria</taxon>
        <taxon>Pseudomonadati</taxon>
        <taxon>Pseudomonadota</taxon>
        <taxon>Alphaproteobacteria</taxon>
        <taxon>Hyphomicrobiales</taxon>
        <taxon>Nitrobacteraceae</taxon>
        <taxon>Rhodopseudomonas</taxon>
    </lineage>
</organism>
<dbReference type="EC" id="1.1.1.267" evidence="1"/>
<dbReference type="EMBL" id="CP001096">
    <property type="protein sequence ID" value="ACF01764.1"/>
    <property type="molecule type" value="Genomic_DNA"/>
</dbReference>
<dbReference type="RefSeq" id="WP_012496356.1">
    <property type="nucleotide sequence ID" value="NC_011004.1"/>
</dbReference>
<dbReference type="SMR" id="B3Q7J8"/>
<dbReference type="KEGG" id="rpt:Rpal_3262"/>
<dbReference type="HOGENOM" id="CLU_035714_4_0_5"/>
<dbReference type="OrthoDB" id="9806546at2"/>
<dbReference type="UniPathway" id="UPA00056">
    <property type="reaction ID" value="UER00092"/>
</dbReference>
<dbReference type="Proteomes" id="UP000001725">
    <property type="component" value="Chromosome"/>
</dbReference>
<dbReference type="GO" id="GO:0030604">
    <property type="term" value="F:1-deoxy-D-xylulose-5-phosphate reductoisomerase activity"/>
    <property type="evidence" value="ECO:0007669"/>
    <property type="project" value="UniProtKB-UniRule"/>
</dbReference>
<dbReference type="GO" id="GO:0030145">
    <property type="term" value="F:manganese ion binding"/>
    <property type="evidence" value="ECO:0007669"/>
    <property type="project" value="TreeGrafter"/>
</dbReference>
<dbReference type="GO" id="GO:0070402">
    <property type="term" value="F:NADPH binding"/>
    <property type="evidence" value="ECO:0007669"/>
    <property type="project" value="InterPro"/>
</dbReference>
<dbReference type="GO" id="GO:0051484">
    <property type="term" value="P:isopentenyl diphosphate biosynthetic process, methylerythritol 4-phosphate pathway involved in terpenoid biosynthetic process"/>
    <property type="evidence" value="ECO:0007669"/>
    <property type="project" value="TreeGrafter"/>
</dbReference>
<dbReference type="FunFam" id="3.40.50.720:FF:000045">
    <property type="entry name" value="1-deoxy-D-xylulose 5-phosphate reductoisomerase"/>
    <property type="match status" value="1"/>
</dbReference>
<dbReference type="Gene3D" id="1.10.1740.10">
    <property type="match status" value="1"/>
</dbReference>
<dbReference type="Gene3D" id="3.40.50.720">
    <property type="entry name" value="NAD(P)-binding Rossmann-like Domain"/>
    <property type="match status" value="1"/>
</dbReference>
<dbReference type="HAMAP" id="MF_00183">
    <property type="entry name" value="DXP_reductoisom"/>
    <property type="match status" value="1"/>
</dbReference>
<dbReference type="InterPro" id="IPR003821">
    <property type="entry name" value="DXP_reductoisomerase"/>
</dbReference>
<dbReference type="InterPro" id="IPR013644">
    <property type="entry name" value="DXP_reductoisomerase_C"/>
</dbReference>
<dbReference type="InterPro" id="IPR013512">
    <property type="entry name" value="DXP_reductoisomerase_N"/>
</dbReference>
<dbReference type="InterPro" id="IPR026877">
    <property type="entry name" value="DXPR_C"/>
</dbReference>
<dbReference type="InterPro" id="IPR036169">
    <property type="entry name" value="DXPR_C_sf"/>
</dbReference>
<dbReference type="InterPro" id="IPR036291">
    <property type="entry name" value="NAD(P)-bd_dom_sf"/>
</dbReference>
<dbReference type="NCBIfam" id="TIGR00243">
    <property type="entry name" value="Dxr"/>
    <property type="match status" value="1"/>
</dbReference>
<dbReference type="PANTHER" id="PTHR30525">
    <property type="entry name" value="1-DEOXY-D-XYLULOSE 5-PHOSPHATE REDUCTOISOMERASE"/>
    <property type="match status" value="1"/>
</dbReference>
<dbReference type="PANTHER" id="PTHR30525:SF0">
    <property type="entry name" value="1-DEOXY-D-XYLULOSE 5-PHOSPHATE REDUCTOISOMERASE, CHLOROPLASTIC"/>
    <property type="match status" value="1"/>
</dbReference>
<dbReference type="Pfam" id="PF08436">
    <property type="entry name" value="DXP_redisom_C"/>
    <property type="match status" value="1"/>
</dbReference>
<dbReference type="Pfam" id="PF02670">
    <property type="entry name" value="DXP_reductoisom"/>
    <property type="match status" value="1"/>
</dbReference>
<dbReference type="Pfam" id="PF13288">
    <property type="entry name" value="DXPR_C"/>
    <property type="match status" value="1"/>
</dbReference>
<dbReference type="PIRSF" id="PIRSF006205">
    <property type="entry name" value="Dxp_reductismrs"/>
    <property type="match status" value="1"/>
</dbReference>
<dbReference type="SUPFAM" id="SSF69055">
    <property type="entry name" value="1-deoxy-D-xylulose-5-phosphate reductoisomerase, C-terminal domain"/>
    <property type="match status" value="1"/>
</dbReference>
<dbReference type="SUPFAM" id="SSF55347">
    <property type="entry name" value="Glyceraldehyde-3-phosphate dehydrogenase-like, C-terminal domain"/>
    <property type="match status" value="1"/>
</dbReference>
<dbReference type="SUPFAM" id="SSF51735">
    <property type="entry name" value="NAD(P)-binding Rossmann-fold domains"/>
    <property type="match status" value="1"/>
</dbReference>
<keyword id="KW-0414">Isoprene biosynthesis</keyword>
<keyword id="KW-0464">Manganese</keyword>
<keyword id="KW-0479">Metal-binding</keyword>
<keyword id="KW-0521">NADP</keyword>
<keyword id="KW-0560">Oxidoreductase</keyword>
<evidence type="ECO:0000255" key="1">
    <source>
        <dbReference type="HAMAP-Rule" id="MF_00183"/>
    </source>
</evidence>
<protein>
    <recommendedName>
        <fullName evidence="1">1-deoxy-D-xylulose 5-phosphate reductoisomerase</fullName>
        <shortName evidence="1">DXP reductoisomerase</shortName>
        <ecNumber evidence="1">1.1.1.267</ecNumber>
    </recommendedName>
    <alternativeName>
        <fullName evidence="1">1-deoxyxylulose-5-phosphate reductoisomerase</fullName>
    </alternativeName>
    <alternativeName>
        <fullName evidence="1">2-C-methyl-D-erythritol 4-phosphate synthase</fullName>
    </alternativeName>
</protein>
<sequence length="407" mass="42509">MSPVPLKNAERAHSGVRTVSVLGATGSIGDSTMDLIRAEPERYRVEALTGNANVAGLAKLAKEFNARFVAVADPARLGELRAALAGTDVACGAGESAVIEAAARPADWVMAAISGAAGLKPALAAVDRGTTVALANKECLVCAGDFFMSRATAAGAQILPADSEHNALFQALASGNRHELTRVIITASGGPFRTWAAADIEQATLAQALKHPNWSMGQKITIDSASMMNKGLEVIEASYLFALSPDEIDVLVHPQSIVHGLVEFADRSVVAQLGAPDMRIPIAHCLGFPDRITGRAAKLDLAKIGQLTFEAPDFTRFPGLRLAYDALRTGNGATTVYNAANEVAVAAFIAQKIRFGAIARLVEDTLNSWVRAGNQAPLGSADDAIALDQQARNLAATLLPQIAAKAS</sequence>
<name>DXR_RHOPT</name>
<accession>B3Q7J8</accession>
<feature type="chain" id="PRO_1000098514" description="1-deoxy-D-xylulose 5-phosphate reductoisomerase">
    <location>
        <begin position="1"/>
        <end position="407"/>
    </location>
</feature>
<feature type="binding site" evidence="1">
    <location>
        <position position="25"/>
    </location>
    <ligand>
        <name>NADPH</name>
        <dbReference type="ChEBI" id="CHEBI:57783"/>
    </ligand>
</feature>
<feature type="binding site" evidence="1">
    <location>
        <position position="26"/>
    </location>
    <ligand>
        <name>NADPH</name>
        <dbReference type="ChEBI" id="CHEBI:57783"/>
    </ligand>
</feature>
<feature type="binding site" evidence="1">
    <location>
        <position position="27"/>
    </location>
    <ligand>
        <name>NADPH</name>
        <dbReference type="ChEBI" id="CHEBI:57783"/>
    </ligand>
</feature>
<feature type="binding site" evidence="1">
    <location>
        <position position="28"/>
    </location>
    <ligand>
        <name>NADPH</name>
        <dbReference type="ChEBI" id="CHEBI:57783"/>
    </ligand>
</feature>
<feature type="binding site" evidence="1">
    <location>
        <position position="53"/>
    </location>
    <ligand>
        <name>NADPH</name>
        <dbReference type="ChEBI" id="CHEBI:57783"/>
    </ligand>
</feature>
<feature type="binding site" evidence="1">
    <location>
        <position position="136"/>
    </location>
    <ligand>
        <name>NADPH</name>
        <dbReference type="ChEBI" id="CHEBI:57783"/>
    </ligand>
</feature>
<feature type="binding site" evidence="1">
    <location>
        <position position="137"/>
    </location>
    <ligand>
        <name>1-deoxy-D-xylulose 5-phosphate</name>
        <dbReference type="ChEBI" id="CHEBI:57792"/>
    </ligand>
</feature>
<feature type="binding site" evidence="1">
    <location>
        <position position="138"/>
    </location>
    <ligand>
        <name>NADPH</name>
        <dbReference type="ChEBI" id="CHEBI:57783"/>
    </ligand>
</feature>
<feature type="binding site" evidence="1">
    <location>
        <position position="162"/>
    </location>
    <ligand>
        <name>Mn(2+)</name>
        <dbReference type="ChEBI" id="CHEBI:29035"/>
    </ligand>
</feature>
<feature type="binding site" evidence="1">
    <location>
        <position position="163"/>
    </location>
    <ligand>
        <name>1-deoxy-D-xylulose 5-phosphate</name>
        <dbReference type="ChEBI" id="CHEBI:57792"/>
    </ligand>
</feature>
<feature type="binding site" evidence="1">
    <location>
        <position position="164"/>
    </location>
    <ligand>
        <name>1-deoxy-D-xylulose 5-phosphate</name>
        <dbReference type="ChEBI" id="CHEBI:57792"/>
    </ligand>
</feature>
<feature type="binding site" evidence="1">
    <location>
        <position position="164"/>
    </location>
    <ligand>
        <name>Mn(2+)</name>
        <dbReference type="ChEBI" id="CHEBI:29035"/>
    </ligand>
</feature>
<feature type="binding site" evidence="1">
    <location>
        <position position="188"/>
    </location>
    <ligand>
        <name>1-deoxy-D-xylulose 5-phosphate</name>
        <dbReference type="ChEBI" id="CHEBI:57792"/>
    </ligand>
</feature>
<feature type="binding site" evidence="1">
    <location>
        <position position="211"/>
    </location>
    <ligand>
        <name>1-deoxy-D-xylulose 5-phosphate</name>
        <dbReference type="ChEBI" id="CHEBI:57792"/>
    </ligand>
</feature>
<feature type="binding site" evidence="1">
    <location>
        <position position="217"/>
    </location>
    <ligand>
        <name>NADPH</name>
        <dbReference type="ChEBI" id="CHEBI:57783"/>
    </ligand>
</feature>
<feature type="binding site" evidence="1">
    <location>
        <position position="224"/>
    </location>
    <ligand>
        <name>1-deoxy-D-xylulose 5-phosphate</name>
        <dbReference type="ChEBI" id="CHEBI:57792"/>
    </ligand>
</feature>
<feature type="binding site" evidence="1">
    <location>
        <position position="229"/>
    </location>
    <ligand>
        <name>1-deoxy-D-xylulose 5-phosphate</name>
        <dbReference type="ChEBI" id="CHEBI:57792"/>
    </ligand>
</feature>
<feature type="binding site" evidence="1">
    <location>
        <position position="230"/>
    </location>
    <ligand>
        <name>1-deoxy-D-xylulose 5-phosphate</name>
        <dbReference type="ChEBI" id="CHEBI:57792"/>
    </ligand>
</feature>
<feature type="binding site" evidence="1">
    <location>
        <position position="233"/>
    </location>
    <ligand>
        <name>1-deoxy-D-xylulose 5-phosphate</name>
        <dbReference type="ChEBI" id="CHEBI:57792"/>
    </ligand>
</feature>
<feature type="binding site" evidence="1">
    <location>
        <position position="233"/>
    </location>
    <ligand>
        <name>Mn(2+)</name>
        <dbReference type="ChEBI" id="CHEBI:29035"/>
    </ligand>
</feature>
<comment type="function">
    <text evidence="1">Catalyzes the NADPH-dependent rearrangement and reduction of 1-deoxy-D-xylulose-5-phosphate (DXP) to 2-C-methyl-D-erythritol 4-phosphate (MEP).</text>
</comment>
<comment type="catalytic activity">
    <reaction evidence="1">
        <text>2-C-methyl-D-erythritol 4-phosphate + NADP(+) = 1-deoxy-D-xylulose 5-phosphate + NADPH + H(+)</text>
        <dbReference type="Rhea" id="RHEA:13717"/>
        <dbReference type="ChEBI" id="CHEBI:15378"/>
        <dbReference type="ChEBI" id="CHEBI:57783"/>
        <dbReference type="ChEBI" id="CHEBI:57792"/>
        <dbReference type="ChEBI" id="CHEBI:58262"/>
        <dbReference type="ChEBI" id="CHEBI:58349"/>
        <dbReference type="EC" id="1.1.1.267"/>
    </reaction>
    <physiologicalReaction direction="right-to-left" evidence="1">
        <dbReference type="Rhea" id="RHEA:13719"/>
    </physiologicalReaction>
</comment>
<comment type="cofactor">
    <cofactor evidence="1">
        <name>Mg(2+)</name>
        <dbReference type="ChEBI" id="CHEBI:18420"/>
    </cofactor>
    <cofactor evidence="1">
        <name>Mn(2+)</name>
        <dbReference type="ChEBI" id="CHEBI:29035"/>
    </cofactor>
</comment>
<comment type="pathway">
    <text evidence="1">Isoprenoid biosynthesis; isopentenyl diphosphate biosynthesis via DXP pathway; isopentenyl diphosphate from 1-deoxy-D-xylulose 5-phosphate: step 1/6.</text>
</comment>
<comment type="similarity">
    <text evidence="1">Belongs to the DXR family.</text>
</comment>
<reference key="1">
    <citation type="submission" date="2008-05" db="EMBL/GenBank/DDBJ databases">
        <title>Complete sequence of Rhodopseudomonas palustris TIE-1.</title>
        <authorList>
            <consortium name="US DOE Joint Genome Institute"/>
            <person name="Lucas S."/>
            <person name="Copeland A."/>
            <person name="Lapidus A."/>
            <person name="Glavina del Rio T."/>
            <person name="Dalin E."/>
            <person name="Tice H."/>
            <person name="Pitluck S."/>
            <person name="Chain P."/>
            <person name="Malfatti S."/>
            <person name="Shin M."/>
            <person name="Vergez L."/>
            <person name="Lang D."/>
            <person name="Schmutz J."/>
            <person name="Larimer F."/>
            <person name="Land M."/>
            <person name="Hauser L."/>
            <person name="Kyrpides N."/>
            <person name="Mikhailova N."/>
            <person name="Emerson D."/>
            <person name="Newman D.K."/>
            <person name="Roden E."/>
            <person name="Richardson P."/>
        </authorList>
    </citation>
    <scope>NUCLEOTIDE SEQUENCE [LARGE SCALE GENOMIC DNA]</scope>
    <source>
        <strain>TIE-1</strain>
    </source>
</reference>
<gene>
    <name evidence="1" type="primary">dxr</name>
    <name type="ordered locus">Rpal_3262</name>
</gene>
<proteinExistence type="inferred from homology"/>